<keyword id="KW-0975">Bacterial flagellum</keyword>
<sequence length="137" mass="15039">MLDKLDGALRFQQEALNLRAQRQEILSSNIANADTPGFQARDIDFSSQLKKVMEQGRASGTGVSLSLTSARHIPASTVQPPDLDLLFRVPDQPSMDGNTVDMDRERTNFADNSLKYQTDLTVLGGQIKGMMSVLQQG</sequence>
<evidence type="ECO:0000250" key="1"/>
<evidence type="ECO:0000305" key="2"/>
<gene>
    <name type="primary">flgB</name>
</gene>
<organism>
    <name type="scientific">Yersinia enterocolitica</name>
    <dbReference type="NCBI Taxonomy" id="630"/>
    <lineage>
        <taxon>Bacteria</taxon>
        <taxon>Pseudomonadati</taxon>
        <taxon>Pseudomonadota</taxon>
        <taxon>Gammaproteobacteria</taxon>
        <taxon>Enterobacterales</taxon>
        <taxon>Yersiniaceae</taxon>
        <taxon>Yersinia</taxon>
    </lineage>
</organism>
<dbReference type="EMBL" id="Z48169">
    <property type="protein sequence ID" value="CAA88192.1"/>
    <property type="molecule type" value="Genomic_DNA"/>
</dbReference>
<dbReference type="PIR" id="S54219">
    <property type="entry name" value="S54219"/>
</dbReference>
<dbReference type="RefSeq" id="WP_005160463.1">
    <property type="nucleotide sequence ID" value="NZ_WJHZ01000011.1"/>
</dbReference>
<dbReference type="SMR" id="Q56893"/>
<dbReference type="STRING" id="1443113.LC20_02156"/>
<dbReference type="GeneID" id="93970220"/>
<dbReference type="eggNOG" id="COG1815">
    <property type="taxonomic scope" value="Bacteria"/>
</dbReference>
<dbReference type="OMA" id="DGHMARN"/>
<dbReference type="GO" id="GO:0030694">
    <property type="term" value="C:bacterial-type flagellum basal body, rod"/>
    <property type="evidence" value="ECO:0007669"/>
    <property type="project" value="InterPro"/>
</dbReference>
<dbReference type="GO" id="GO:0071973">
    <property type="term" value="P:bacterial-type flagellum-dependent cell motility"/>
    <property type="evidence" value="ECO:0007669"/>
    <property type="project" value="InterPro"/>
</dbReference>
<dbReference type="InterPro" id="IPR001444">
    <property type="entry name" value="Flag_bb_rod_N"/>
</dbReference>
<dbReference type="InterPro" id="IPR019776">
    <property type="entry name" value="Flagellar_basal_body_rod_CS"/>
</dbReference>
<dbReference type="InterPro" id="IPR006300">
    <property type="entry name" value="FlgB"/>
</dbReference>
<dbReference type="NCBIfam" id="TIGR01396">
    <property type="entry name" value="FlgB"/>
    <property type="match status" value="1"/>
</dbReference>
<dbReference type="PANTHER" id="PTHR30435:SF12">
    <property type="entry name" value="FLAGELLAR BASAL BODY ROD PROTEIN FLGB"/>
    <property type="match status" value="1"/>
</dbReference>
<dbReference type="PANTHER" id="PTHR30435">
    <property type="entry name" value="FLAGELLAR PROTEIN"/>
    <property type="match status" value="1"/>
</dbReference>
<dbReference type="Pfam" id="PF00460">
    <property type="entry name" value="Flg_bb_rod"/>
    <property type="match status" value="1"/>
</dbReference>
<dbReference type="PIRSF" id="PIRSF002889">
    <property type="entry name" value="Rod_FlgB"/>
    <property type="match status" value="1"/>
</dbReference>
<dbReference type="PROSITE" id="PS00588">
    <property type="entry name" value="FLAGELLA_BB_ROD"/>
    <property type="match status" value="1"/>
</dbReference>
<accession>Q56893</accession>
<comment type="function">
    <text evidence="1">Structural component of flagellum, the bacterial motility apparatus. Part of the rod structure of flagellar basal body (By similarity).</text>
</comment>
<comment type="subunit">
    <text evidence="1">The basal body constitutes a major portion of the flagellar organelle and consists of a number of rings mounted on a central rod. In Gram-negative bacteria, at least four rings, L, P, S and M are present, whereas Gram-positive bacteria lack the L and P rings. The rod consists of about 26 subunits of FlgG in the distal portion, and FlgB, FlgC and FlgF build up the proximal portion of the rod with about 6 subunits each. Rod assembly occurs by export via the flagellum-specific pathway of its constituent proteins and by their incorporation into the rod structure in the probable order of FlgB, FlgC, FlgF and FlgG. Another protein, FliE, also assembles onto the stable rod structure (By similarity).</text>
</comment>
<comment type="subcellular location">
    <subcellularLocation>
        <location evidence="1">Bacterial flagellum basal body</location>
    </subcellularLocation>
</comment>
<comment type="similarity">
    <text evidence="2">Belongs to the flagella basal body rod proteins family.</text>
</comment>
<name>FLGB_YEREN</name>
<protein>
    <recommendedName>
        <fullName>Flagellar basal body rod protein FlgB</fullName>
    </recommendedName>
</protein>
<proteinExistence type="inferred from homology"/>
<feature type="chain" id="PRO_0000180794" description="Flagellar basal body rod protein FlgB">
    <location>
        <begin position="1"/>
        <end position="137"/>
    </location>
</feature>
<reference key="1">
    <citation type="submission" date="1995-05" db="EMBL/GenBank/DDBJ databases">
        <authorList>
            <person name="Fauconnier A."/>
            <person name="Allaoui A."/>
            <person name="van Elsen A."/>
            <person name="Cornelis G."/>
            <person name="Bollen A."/>
        </authorList>
    </citation>
    <scope>NUCLEOTIDE SEQUENCE [GENOMIC DNA]</scope>
    <source>
        <strain>W1024 / Serotype O:9</strain>
    </source>
</reference>